<evidence type="ECO:0000250" key="1">
    <source>
        <dbReference type="UniProtKB" id="P04191"/>
    </source>
</evidence>
<evidence type="ECO:0000250" key="2">
    <source>
        <dbReference type="UniProtKB" id="Q8NB49"/>
    </source>
</evidence>
<evidence type="ECO:0000250" key="3">
    <source>
        <dbReference type="UniProtKB" id="Q9Y2Q0"/>
    </source>
</evidence>
<evidence type="ECO:0000255" key="4"/>
<evidence type="ECO:0000269" key="5">
    <source>
    </source>
</evidence>
<evidence type="ECO:0000303" key="6">
    <source>
    </source>
</evidence>
<evidence type="ECO:0000305" key="7"/>
<proteinExistence type="evidence at transcript level"/>
<reference key="1">
    <citation type="journal article" date="2009" name="J. Cell Sci.">
        <title>Identification of a novel mouse P4-ATPase family member highly expressed during spermatogenesis.</title>
        <authorList>
            <person name="Xu P."/>
            <person name="Okkeri J."/>
            <person name="Hanisch S."/>
            <person name="Hu R.Y."/>
            <person name="Xu Q."/>
            <person name="Pomorski T.G."/>
            <person name="Ding X.Y."/>
        </authorList>
    </citation>
    <scope>NUCLEOTIDE SEQUENCE [MRNA] (ISOFORM 1)</scope>
    <scope>FUNCTION</scope>
    <scope>SUBCELLULAR LOCATION</scope>
    <scope>TISSUE SPECIFICITY</scope>
    <scope>DEVELOPMENTAL STAGE</scope>
    <source>
        <tissue>Testis</tissue>
    </source>
</reference>
<reference key="2">
    <citation type="journal article" date="2005" name="Science">
        <title>The transcriptional landscape of the mammalian genome.</title>
        <authorList>
            <person name="Carninci P."/>
            <person name="Kasukawa T."/>
            <person name="Katayama S."/>
            <person name="Gough J."/>
            <person name="Frith M.C."/>
            <person name="Maeda N."/>
            <person name="Oyama R."/>
            <person name="Ravasi T."/>
            <person name="Lenhard B."/>
            <person name="Wells C."/>
            <person name="Kodzius R."/>
            <person name="Shimokawa K."/>
            <person name="Bajic V.B."/>
            <person name="Brenner S.E."/>
            <person name="Batalov S."/>
            <person name="Forrest A.R."/>
            <person name="Zavolan M."/>
            <person name="Davis M.J."/>
            <person name="Wilming L.G."/>
            <person name="Aidinis V."/>
            <person name="Allen J.E."/>
            <person name="Ambesi-Impiombato A."/>
            <person name="Apweiler R."/>
            <person name="Aturaliya R.N."/>
            <person name="Bailey T.L."/>
            <person name="Bansal M."/>
            <person name="Baxter L."/>
            <person name="Beisel K.W."/>
            <person name="Bersano T."/>
            <person name="Bono H."/>
            <person name="Chalk A.M."/>
            <person name="Chiu K.P."/>
            <person name="Choudhary V."/>
            <person name="Christoffels A."/>
            <person name="Clutterbuck D.R."/>
            <person name="Crowe M.L."/>
            <person name="Dalla E."/>
            <person name="Dalrymple B.P."/>
            <person name="de Bono B."/>
            <person name="Della Gatta G."/>
            <person name="di Bernardo D."/>
            <person name="Down T."/>
            <person name="Engstrom P."/>
            <person name="Fagiolini M."/>
            <person name="Faulkner G."/>
            <person name="Fletcher C.F."/>
            <person name="Fukushima T."/>
            <person name="Furuno M."/>
            <person name="Futaki S."/>
            <person name="Gariboldi M."/>
            <person name="Georgii-Hemming P."/>
            <person name="Gingeras T.R."/>
            <person name="Gojobori T."/>
            <person name="Green R.E."/>
            <person name="Gustincich S."/>
            <person name="Harbers M."/>
            <person name="Hayashi Y."/>
            <person name="Hensch T.K."/>
            <person name="Hirokawa N."/>
            <person name="Hill D."/>
            <person name="Huminiecki L."/>
            <person name="Iacono M."/>
            <person name="Ikeo K."/>
            <person name="Iwama A."/>
            <person name="Ishikawa T."/>
            <person name="Jakt M."/>
            <person name="Kanapin A."/>
            <person name="Katoh M."/>
            <person name="Kawasawa Y."/>
            <person name="Kelso J."/>
            <person name="Kitamura H."/>
            <person name="Kitano H."/>
            <person name="Kollias G."/>
            <person name="Krishnan S.P."/>
            <person name="Kruger A."/>
            <person name="Kummerfeld S.K."/>
            <person name="Kurochkin I.V."/>
            <person name="Lareau L.F."/>
            <person name="Lazarevic D."/>
            <person name="Lipovich L."/>
            <person name="Liu J."/>
            <person name="Liuni S."/>
            <person name="McWilliam S."/>
            <person name="Madan Babu M."/>
            <person name="Madera M."/>
            <person name="Marchionni L."/>
            <person name="Matsuda H."/>
            <person name="Matsuzawa S."/>
            <person name="Miki H."/>
            <person name="Mignone F."/>
            <person name="Miyake S."/>
            <person name="Morris K."/>
            <person name="Mottagui-Tabar S."/>
            <person name="Mulder N."/>
            <person name="Nakano N."/>
            <person name="Nakauchi H."/>
            <person name="Ng P."/>
            <person name="Nilsson R."/>
            <person name="Nishiguchi S."/>
            <person name="Nishikawa S."/>
            <person name="Nori F."/>
            <person name="Ohara O."/>
            <person name="Okazaki Y."/>
            <person name="Orlando V."/>
            <person name="Pang K.C."/>
            <person name="Pavan W.J."/>
            <person name="Pavesi G."/>
            <person name="Pesole G."/>
            <person name="Petrovsky N."/>
            <person name="Piazza S."/>
            <person name="Reed J."/>
            <person name="Reid J.F."/>
            <person name="Ring B.Z."/>
            <person name="Ringwald M."/>
            <person name="Rost B."/>
            <person name="Ruan Y."/>
            <person name="Salzberg S.L."/>
            <person name="Sandelin A."/>
            <person name="Schneider C."/>
            <person name="Schoenbach C."/>
            <person name="Sekiguchi K."/>
            <person name="Semple C.A."/>
            <person name="Seno S."/>
            <person name="Sessa L."/>
            <person name="Sheng Y."/>
            <person name="Shibata Y."/>
            <person name="Shimada H."/>
            <person name="Shimada K."/>
            <person name="Silva D."/>
            <person name="Sinclair B."/>
            <person name="Sperling S."/>
            <person name="Stupka E."/>
            <person name="Sugiura K."/>
            <person name="Sultana R."/>
            <person name="Takenaka Y."/>
            <person name="Taki K."/>
            <person name="Tammoja K."/>
            <person name="Tan S.L."/>
            <person name="Tang S."/>
            <person name="Taylor M.S."/>
            <person name="Tegner J."/>
            <person name="Teichmann S.A."/>
            <person name="Ueda H.R."/>
            <person name="van Nimwegen E."/>
            <person name="Verardo R."/>
            <person name="Wei C.L."/>
            <person name="Yagi K."/>
            <person name="Yamanishi H."/>
            <person name="Zabarovsky E."/>
            <person name="Zhu S."/>
            <person name="Zimmer A."/>
            <person name="Hide W."/>
            <person name="Bult C."/>
            <person name="Grimmond S.M."/>
            <person name="Teasdale R.D."/>
            <person name="Liu E.T."/>
            <person name="Brusic V."/>
            <person name="Quackenbush J."/>
            <person name="Wahlestedt C."/>
            <person name="Mattick J.S."/>
            <person name="Hume D.A."/>
            <person name="Kai C."/>
            <person name="Sasaki D."/>
            <person name="Tomaru Y."/>
            <person name="Fukuda S."/>
            <person name="Kanamori-Katayama M."/>
            <person name="Suzuki M."/>
            <person name="Aoki J."/>
            <person name="Arakawa T."/>
            <person name="Iida J."/>
            <person name="Imamura K."/>
            <person name="Itoh M."/>
            <person name="Kato T."/>
            <person name="Kawaji H."/>
            <person name="Kawagashira N."/>
            <person name="Kawashima T."/>
            <person name="Kojima M."/>
            <person name="Kondo S."/>
            <person name="Konno H."/>
            <person name="Nakano K."/>
            <person name="Ninomiya N."/>
            <person name="Nishio T."/>
            <person name="Okada M."/>
            <person name="Plessy C."/>
            <person name="Shibata K."/>
            <person name="Shiraki T."/>
            <person name="Suzuki S."/>
            <person name="Tagami M."/>
            <person name="Waki K."/>
            <person name="Watahiki A."/>
            <person name="Okamura-Oho Y."/>
            <person name="Suzuki H."/>
            <person name="Kawai J."/>
            <person name="Hayashizaki Y."/>
        </authorList>
    </citation>
    <scope>NUCLEOTIDE SEQUENCE [LARGE SCALE MRNA] (ISOFORMS 2 AND 3)</scope>
    <source>
        <strain>C57BL/6J</strain>
        <tissue>Gonad</tissue>
        <tissue>Testis</tissue>
    </source>
</reference>
<reference key="3">
    <citation type="journal article" date="2009" name="PLoS Biol.">
        <title>Lineage-specific biology revealed by a finished genome assembly of the mouse.</title>
        <authorList>
            <person name="Church D.M."/>
            <person name="Goodstadt L."/>
            <person name="Hillier L.W."/>
            <person name="Zody M.C."/>
            <person name="Goldstein S."/>
            <person name="She X."/>
            <person name="Bult C.J."/>
            <person name="Agarwala R."/>
            <person name="Cherry J.L."/>
            <person name="DiCuccio M."/>
            <person name="Hlavina W."/>
            <person name="Kapustin Y."/>
            <person name="Meric P."/>
            <person name="Maglott D."/>
            <person name="Birtle Z."/>
            <person name="Marques A.C."/>
            <person name="Graves T."/>
            <person name="Zhou S."/>
            <person name="Teague B."/>
            <person name="Potamousis K."/>
            <person name="Churas C."/>
            <person name="Place M."/>
            <person name="Herschleb J."/>
            <person name="Runnheim R."/>
            <person name="Forrest D."/>
            <person name="Amos-Landgraf J."/>
            <person name="Schwartz D.C."/>
            <person name="Cheng Z."/>
            <person name="Lindblad-Toh K."/>
            <person name="Eichler E.E."/>
            <person name="Ponting C.P."/>
        </authorList>
    </citation>
    <scope>NUCLEOTIDE SEQUENCE [LARGE SCALE GENOMIC DNA]</scope>
    <source>
        <strain>C57BL/6J</strain>
    </source>
</reference>
<keyword id="KW-0025">Alternative splicing</keyword>
<keyword id="KW-0067">ATP-binding</keyword>
<keyword id="KW-0968">Cytoplasmic vesicle</keyword>
<keyword id="KW-0445">Lipid transport</keyword>
<keyword id="KW-0460">Magnesium</keyword>
<keyword id="KW-0472">Membrane</keyword>
<keyword id="KW-0479">Metal-binding</keyword>
<keyword id="KW-0547">Nucleotide-binding</keyword>
<keyword id="KW-1185">Reference proteome</keyword>
<keyword id="KW-1278">Translocase</keyword>
<keyword id="KW-0812">Transmembrane</keyword>
<keyword id="KW-1133">Transmembrane helix</keyword>
<keyword id="KW-0813">Transport</keyword>
<protein>
    <recommendedName>
        <fullName>Phospholipid-transporting ATPase FetA</fullName>
        <ecNumber>7.6.2.1</ecNumber>
    </recommendedName>
    <alternativeName>
        <fullName>ATPase class I type 8B member 2-like protein</fullName>
    </alternativeName>
    <alternativeName>
        <fullName>ATPase class I type 8B member 5</fullName>
    </alternativeName>
    <alternativeName>
        <fullName>Flippase expressed in testis A</fullName>
    </alternativeName>
</protein>
<accession>A3FIN4</accession>
<accession>A2AIL8</accession>
<accession>Q8BVE9</accession>
<accession>Q8BVS7</accession>
<comment type="function">
    <text evidence="5">P4-ATPase flippase which catalyzes the hydrolysis of ATP coupled to the transport of aminophospholipids from the outer to the inner leaflet of various membranes and ensures the maintenance of asymmetric distribution of phospholipids. Phospholipid translocation also seems to be implicated in vesicle formation and in uptake of lipid signaling molecules. May play a role in phospholid transport across membranes and in acrosome formation.</text>
</comment>
<comment type="catalytic activity">
    <reaction>
        <text>ATP + H2O + phospholipidSide 1 = ADP + phosphate + phospholipidSide 2.</text>
        <dbReference type="EC" id="7.6.2.1"/>
    </reaction>
</comment>
<comment type="cofactor">
    <cofactor evidence="3">
        <name>Mg(2+)</name>
        <dbReference type="ChEBI" id="CHEBI:18420"/>
    </cofactor>
</comment>
<comment type="subcellular location">
    <subcellularLocation>
        <location evidence="5">Cytoplasmic vesicle</location>
        <location evidence="5">Secretory vesicle</location>
        <location evidence="5">Acrosome membrane</location>
        <topology evidence="5">Multi-pass membrane protein</topology>
    </subcellularLocation>
</comment>
<comment type="alternative products">
    <event type="alternative splicing"/>
    <isoform>
        <id>A3FIN4-1</id>
        <name>1</name>
        <sequence type="displayed"/>
    </isoform>
    <isoform>
        <id>A3FIN4-2</id>
        <name>2</name>
        <sequence type="described" ref="VSP_031844 VSP_031845"/>
    </isoform>
    <isoform>
        <id>A3FIN4-3</id>
        <name>3</name>
        <sequence type="described" ref="VSP_031846 VSP_031847"/>
    </isoform>
</comment>
<comment type="tissue specificity">
    <text evidence="5">Highly expressed in testis.</text>
</comment>
<comment type="developmental stage">
    <text evidence="5">Not detected in testis until 18 days postpartum. At 22 days postpartum, levels increase and remain constant during adulthood. During spermatogenesis, expressed from pachytene spermatocytes to mature sperm.</text>
</comment>
<comment type="similarity">
    <text evidence="7">Belongs to the cation transport ATPase (P-type) (TC 3.A.3) family. Type IV subfamily.</text>
</comment>
<gene>
    <name type="primary">Atp8b5</name>
    <name type="synonym">Feta</name>
</gene>
<name>AT8B5_MOUSE</name>
<dbReference type="EC" id="7.6.2.1"/>
<dbReference type="EMBL" id="EF377342">
    <property type="protein sequence ID" value="ABN48718.1"/>
    <property type="molecule type" value="mRNA"/>
</dbReference>
<dbReference type="EMBL" id="AK076708">
    <property type="protein sequence ID" value="BAC36451.1"/>
    <property type="molecule type" value="mRNA"/>
</dbReference>
<dbReference type="EMBL" id="AK078567">
    <property type="protein sequence ID" value="BAC37336.1"/>
    <property type="molecule type" value="mRNA"/>
</dbReference>
<dbReference type="EMBL" id="AL732504">
    <property type="protein sequence ID" value="CAM16526.1"/>
    <property type="molecule type" value="Genomic_DNA"/>
</dbReference>
<dbReference type="EMBL" id="AL732504">
    <property type="protein sequence ID" value="CAM16528.2"/>
    <property type="molecule type" value="Genomic_DNA"/>
</dbReference>
<dbReference type="CCDS" id="CCDS18091.2">
    <molecule id="A3FIN4-1"/>
</dbReference>
<dbReference type="RefSeq" id="NP_796169.2">
    <molecule id="A3FIN4-1"/>
    <property type="nucleotide sequence ID" value="NM_177195.3"/>
</dbReference>
<dbReference type="SMR" id="A3FIN4"/>
<dbReference type="FunCoup" id="A3FIN4">
    <property type="interactions" value="144"/>
</dbReference>
<dbReference type="STRING" id="10090.ENSMUSP00000103575"/>
<dbReference type="iPTMnet" id="A3FIN4"/>
<dbReference type="PhosphoSitePlus" id="A3FIN4"/>
<dbReference type="PaxDb" id="10090-ENSMUSP00000103575"/>
<dbReference type="ProteomicsDB" id="265156">
    <molecule id="A3FIN4-1"/>
</dbReference>
<dbReference type="DNASU" id="320571"/>
<dbReference type="Ensembl" id="ENSMUST00000102953.4">
    <molecule id="A3FIN4-2"/>
    <property type="protein sequence ID" value="ENSMUSP00000100018.4"/>
    <property type="gene ID" value="ENSMUSG00000028457.19"/>
</dbReference>
<dbReference type="Ensembl" id="ENSMUST00000107942.9">
    <molecule id="A3FIN4-1"/>
    <property type="protein sequence ID" value="ENSMUSP00000103575.3"/>
    <property type="gene ID" value="ENSMUSG00000028457.19"/>
</dbReference>
<dbReference type="GeneID" id="320571"/>
<dbReference type="KEGG" id="mmu:320571"/>
<dbReference type="UCSC" id="uc008spj.1">
    <molecule id="A3FIN4-2"/>
    <property type="organism name" value="mouse"/>
</dbReference>
<dbReference type="UCSC" id="uc008spk.1">
    <molecule id="A3FIN4-3"/>
    <property type="organism name" value="mouse"/>
</dbReference>
<dbReference type="UCSC" id="uc008spl.1">
    <molecule id="A3FIN4-1"/>
    <property type="organism name" value="mouse"/>
</dbReference>
<dbReference type="AGR" id="MGI:2444287"/>
<dbReference type="CTD" id="320571"/>
<dbReference type="MGI" id="MGI:2444287">
    <property type="gene designation" value="Atp8b5"/>
</dbReference>
<dbReference type="VEuPathDB" id="HostDB:ENSMUSG00000028457"/>
<dbReference type="eggNOG" id="KOG0206">
    <property type="taxonomic scope" value="Eukaryota"/>
</dbReference>
<dbReference type="GeneTree" id="ENSGT00940000161917"/>
<dbReference type="HOGENOM" id="CLU_000846_3_2_1"/>
<dbReference type="InParanoid" id="A3FIN4"/>
<dbReference type="OMA" id="WSYFIVL"/>
<dbReference type="OrthoDB" id="377733at2759"/>
<dbReference type="PhylomeDB" id="A3FIN4"/>
<dbReference type="TreeFam" id="TF300654"/>
<dbReference type="BioGRID-ORCS" id="320571">
    <property type="hits" value="1 hit in 78 CRISPR screens"/>
</dbReference>
<dbReference type="ChiTaRS" id="Atp8b5">
    <property type="organism name" value="mouse"/>
</dbReference>
<dbReference type="PRO" id="PR:A3FIN4"/>
<dbReference type="Proteomes" id="UP000000589">
    <property type="component" value="Chromosome 4"/>
</dbReference>
<dbReference type="RNAct" id="A3FIN4">
    <property type="molecule type" value="protein"/>
</dbReference>
<dbReference type="Bgee" id="ENSMUSG00000028457">
    <property type="expression patterns" value="Expressed in spermatocyte and 51 other cell types or tissues"/>
</dbReference>
<dbReference type="ExpressionAtlas" id="A3FIN4">
    <property type="expression patterns" value="baseline and differential"/>
</dbReference>
<dbReference type="GO" id="GO:0002080">
    <property type="term" value="C:acrosomal membrane"/>
    <property type="evidence" value="ECO:0007669"/>
    <property type="project" value="UniProtKB-SubCell"/>
</dbReference>
<dbReference type="GO" id="GO:0001669">
    <property type="term" value="C:acrosomal vesicle"/>
    <property type="evidence" value="ECO:0000314"/>
    <property type="project" value="UniProtKB"/>
</dbReference>
<dbReference type="GO" id="GO:0016020">
    <property type="term" value="C:membrane"/>
    <property type="evidence" value="ECO:0000314"/>
    <property type="project" value="UniProtKB"/>
</dbReference>
<dbReference type="GO" id="GO:0005524">
    <property type="term" value="F:ATP binding"/>
    <property type="evidence" value="ECO:0007669"/>
    <property type="project" value="UniProtKB-KW"/>
</dbReference>
<dbReference type="GO" id="GO:0016887">
    <property type="term" value="F:ATP hydrolysis activity"/>
    <property type="evidence" value="ECO:0007669"/>
    <property type="project" value="InterPro"/>
</dbReference>
<dbReference type="GO" id="GO:0000287">
    <property type="term" value="F:magnesium ion binding"/>
    <property type="evidence" value="ECO:0007669"/>
    <property type="project" value="InterPro"/>
</dbReference>
<dbReference type="GO" id="GO:0140345">
    <property type="term" value="F:phosphatidylcholine flippase activity"/>
    <property type="evidence" value="ECO:0000315"/>
    <property type="project" value="UniProtKB"/>
</dbReference>
<dbReference type="GO" id="GO:0090555">
    <property type="term" value="F:phosphatidylethanolamine flippase activity"/>
    <property type="evidence" value="ECO:0000315"/>
    <property type="project" value="UniProtKB"/>
</dbReference>
<dbReference type="GO" id="GO:0007030">
    <property type="term" value="P:Golgi organization"/>
    <property type="evidence" value="ECO:0000315"/>
    <property type="project" value="UniProtKB"/>
</dbReference>
<dbReference type="GO" id="GO:0015914">
    <property type="term" value="P:phospholipid transport"/>
    <property type="evidence" value="ECO:0000315"/>
    <property type="project" value="UniProtKB"/>
</dbReference>
<dbReference type="CDD" id="cd02073">
    <property type="entry name" value="P-type_ATPase_APLT_Dnf-like"/>
    <property type="match status" value="1"/>
</dbReference>
<dbReference type="FunFam" id="2.70.150.10:FF:000025">
    <property type="entry name" value="Phospholipid-transporting ATPase"/>
    <property type="match status" value="1"/>
</dbReference>
<dbReference type="FunFam" id="3.40.1110.10:FF:000188">
    <property type="entry name" value="Phospholipid-transporting ATPase"/>
    <property type="match status" value="1"/>
</dbReference>
<dbReference type="FunFam" id="3.40.50.1000:FF:000014">
    <property type="entry name" value="Phospholipid-transporting ATPase"/>
    <property type="match status" value="1"/>
</dbReference>
<dbReference type="FunFam" id="3.40.50.1000:FF:000001">
    <property type="entry name" value="Phospholipid-transporting ATPase IC"/>
    <property type="match status" value="1"/>
</dbReference>
<dbReference type="Gene3D" id="3.40.1110.10">
    <property type="entry name" value="Calcium-transporting ATPase, cytoplasmic domain N"/>
    <property type="match status" value="1"/>
</dbReference>
<dbReference type="Gene3D" id="2.70.150.10">
    <property type="entry name" value="Calcium-transporting ATPase, cytoplasmic transduction domain A"/>
    <property type="match status" value="1"/>
</dbReference>
<dbReference type="Gene3D" id="3.40.50.1000">
    <property type="entry name" value="HAD superfamily/HAD-like"/>
    <property type="match status" value="1"/>
</dbReference>
<dbReference type="InterPro" id="IPR023299">
    <property type="entry name" value="ATPase_P-typ_cyto_dom_N"/>
</dbReference>
<dbReference type="InterPro" id="IPR018303">
    <property type="entry name" value="ATPase_P-typ_P_site"/>
</dbReference>
<dbReference type="InterPro" id="IPR023298">
    <property type="entry name" value="ATPase_P-typ_TM_dom_sf"/>
</dbReference>
<dbReference type="InterPro" id="IPR008250">
    <property type="entry name" value="ATPase_P-typ_transduc_dom_A_sf"/>
</dbReference>
<dbReference type="InterPro" id="IPR036412">
    <property type="entry name" value="HAD-like_sf"/>
</dbReference>
<dbReference type="InterPro" id="IPR023214">
    <property type="entry name" value="HAD_sf"/>
</dbReference>
<dbReference type="InterPro" id="IPR006539">
    <property type="entry name" value="P-type_ATPase_IV"/>
</dbReference>
<dbReference type="InterPro" id="IPR032631">
    <property type="entry name" value="P-type_ATPase_N"/>
</dbReference>
<dbReference type="InterPro" id="IPR001757">
    <property type="entry name" value="P_typ_ATPase"/>
</dbReference>
<dbReference type="InterPro" id="IPR032630">
    <property type="entry name" value="P_typ_ATPase_c"/>
</dbReference>
<dbReference type="InterPro" id="IPR044492">
    <property type="entry name" value="P_typ_ATPase_HD_dom"/>
</dbReference>
<dbReference type="NCBIfam" id="TIGR01652">
    <property type="entry name" value="ATPase-Plipid"/>
    <property type="match status" value="1"/>
</dbReference>
<dbReference type="NCBIfam" id="TIGR01494">
    <property type="entry name" value="ATPase_P-type"/>
    <property type="match status" value="1"/>
</dbReference>
<dbReference type="PANTHER" id="PTHR24092:SF52">
    <property type="entry name" value="PHOSPHOLIPID-TRANSPORTING ATPASE FETA"/>
    <property type="match status" value="1"/>
</dbReference>
<dbReference type="PANTHER" id="PTHR24092">
    <property type="entry name" value="PROBABLE PHOSPHOLIPID-TRANSPORTING ATPASE"/>
    <property type="match status" value="1"/>
</dbReference>
<dbReference type="Pfam" id="PF13246">
    <property type="entry name" value="Cation_ATPase"/>
    <property type="match status" value="1"/>
</dbReference>
<dbReference type="Pfam" id="PF16212">
    <property type="entry name" value="PhoLip_ATPase_C"/>
    <property type="match status" value="1"/>
</dbReference>
<dbReference type="Pfam" id="PF16209">
    <property type="entry name" value="PhoLip_ATPase_N"/>
    <property type="match status" value="1"/>
</dbReference>
<dbReference type="PRINTS" id="PR00119">
    <property type="entry name" value="CATATPASE"/>
</dbReference>
<dbReference type="SFLD" id="SFLDS00003">
    <property type="entry name" value="Haloacid_Dehalogenase"/>
    <property type="match status" value="1"/>
</dbReference>
<dbReference type="SFLD" id="SFLDF00027">
    <property type="entry name" value="p-type_atpase"/>
    <property type="match status" value="1"/>
</dbReference>
<dbReference type="SUPFAM" id="SSF81653">
    <property type="entry name" value="Calcium ATPase, transduction domain A"/>
    <property type="match status" value="1"/>
</dbReference>
<dbReference type="SUPFAM" id="SSF81665">
    <property type="entry name" value="Calcium ATPase, transmembrane domain M"/>
    <property type="match status" value="1"/>
</dbReference>
<dbReference type="SUPFAM" id="SSF56784">
    <property type="entry name" value="HAD-like"/>
    <property type="match status" value="1"/>
</dbReference>
<dbReference type="SUPFAM" id="SSF81660">
    <property type="entry name" value="Metal cation-transporting ATPase, ATP-binding domain N"/>
    <property type="match status" value="1"/>
</dbReference>
<dbReference type="PROSITE" id="PS00154">
    <property type="entry name" value="ATPASE_E1_E2"/>
    <property type="match status" value="1"/>
</dbReference>
<feature type="chain" id="PRO_0000321955" description="Phospholipid-transporting ATPase FetA">
    <location>
        <begin position="1"/>
        <end position="1183"/>
    </location>
</feature>
<feature type="transmembrane region" description="Helical" evidence="4">
    <location>
        <begin position="96"/>
        <end position="116"/>
    </location>
</feature>
<feature type="transmembrane region" description="Helical" evidence="4">
    <location>
        <begin position="299"/>
        <end position="319"/>
    </location>
</feature>
<feature type="transmembrane region" description="Helical" evidence="4">
    <location>
        <begin position="348"/>
        <end position="368"/>
    </location>
</feature>
<feature type="transmembrane region" description="Helical" evidence="4">
    <location>
        <begin position="904"/>
        <end position="924"/>
    </location>
</feature>
<feature type="transmembrane region" description="Helical" evidence="4">
    <location>
        <begin position="927"/>
        <end position="947"/>
    </location>
</feature>
<feature type="transmembrane region" description="Helical" evidence="4">
    <location>
        <begin position="981"/>
        <end position="1001"/>
    </location>
</feature>
<feature type="transmembrane region" description="Helical" evidence="4">
    <location>
        <begin position="1014"/>
        <end position="1034"/>
    </location>
</feature>
<feature type="transmembrane region" description="Helical" evidence="4">
    <location>
        <begin position="1049"/>
        <end position="1069"/>
    </location>
</feature>
<feature type="transmembrane region" description="Helical" evidence="4">
    <location>
        <begin position="1090"/>
        <end position="1110"/>
    </location>
</feature>
<feature type="active site" description="4-aspartylphosphate intermediate" evidence="3">
    <location>
        <position position="416"/>
    </location>
</feature>
<feature type="binding site" evidence="3">
    <location>
        <position position="416"/>
    </location>
    <ligand>
        <name>ATP</name>
        <dbReference type="ChEBI" id="CHEBI:30616"/>
    </ligand>
</feature>
<feature type="binding site" evidence="3">
    <location>
        <position position="416"/>
    </location>
    <ligand>
        <name>Mg(2+)</name>
        <dbReference type="ChEBI" id="CHEBI:18420"/>
    </ligand>
</feature>
<feature type="binding site" evidence="3">
    <location>
        <position position="417"/>
    </location>
    <ligand>
        <name>ATP</name>
        <dbReference type="ChEBI" id="CHEBI:30616"/>
    </ligand>
</feature>
<feature type="binding site" evidence="3">
    <location>
        <position position="418"/>
    </location>
    <ligand>
        <name>ATP</name>
        <dbReference type="ChEBI" id="CHEBI:30616"/>
    </ligand>
</feature>
<feature type="binding site" evidence="3">
    <location>
        <position position="418"/>
    </location>
    <ligand>
        <name>Mg(2+)</name>
        <dbReference type="ChEBI" id="CHEBI:18420"/>
    </ligand>
</feature>
<feature type="binding site" evidence="1">
    <location>
        <position position="519"/>
    </location>
    <ligand>
        <name>ATP</name>
        <dbReference type="ChEBI" id="CHEBI:30616"/>
    </ligand>
</feature>
<feature type="binding site" evidence="3">
    <location>
        <position position="560"/>
    </location>
    <ligand>
        <name>ATP</name>
        <dbReference type="ChEBI" id="CHEBI:30616"/>
    </ligand>
</feature>
<feature type="binding site" evidence="1">
    <location>
        <position position="583"/>
    </location>
    <ligand>
        <name>ATP</name>
        <dbReference type="ChEBI" id="CHEBI:30616"/>
    </ligand>
</feature>
<feature type="binding site" evidence="1">
    <location>
        <position position="617"/>
    </location>
    <ligand>
        <name>ATP</name>
        <dbReference type="ChEBI" id="CHEBI:30616"/>
    </ligand>
</feature>
<feature type="binding site" evidence="1">
    <location>
        <position position="697"/>
    </location>
    <ligand>
        <name>ATP</name>
        <dbReference type="ChEBI" id="CHEBI:30616"/>
    </ligand>
</feature>
<feature type="binding site" evidence="1">
    <location>
        <position position="698"/>
    </location>
    <ligand>
        <name>ATP</name>
        <dbReference type="ChEBI" id="CHEBI:30616"/>
    </ligand>
</feature>
<feature type="binding site" evidence="1">
    <location>
        <position position="699"/>
    </location>
    <ligand>
        <name>ATP</name>
        <dbReference type="ChEBI" id="CHEBI:30616"/>
    </ligand>
</feature>
<feature type="binding site" evidence="1">
    <location>
        <position position="812"/>
    </location>
    <ligand>
        <name>ATP</name>
        <dbReference type="ChEBI" id="CHEBI:30616"/>
    </ligand>
</feature>
<feature type="binding site" evidence="1">
    <location>
        <position position="818"/>
    </location>
    <ligand>
        <name>ATP</name>
        <dbReference type="ChEBI" id="CHEBI:30616"/>
    </ligand>
</feature>
<feature type="binding site" evidence="3">
    <location>
        <position position="838"/>
    </location>
    <ligand>
        <name>Mg(2+)</name>
        <dbReference type="ChEBI" id="CHEBI:18420"/>
    </ligand>
</feature>
<feature type="binding site" evidence="3">
    <location>
        <position position="841"/>
    </location>
    <ligand>
        <name>ATP</name>
        <dbReference type="ChEBI" id="CHEBI:30616"/>
    </ligand>
</feature>
<feature type="binding site" evidence="3">
    <location>
        <position position="842"/>
    </location>
    <ligand>
        <name>ATP</name>
        <dbReference type="ChEBI" id="CHEBI:30616"/>
    </ligand>
</feature>
<feature type="binding site" evidence="2">
    <location>
        <position position="842"/>
    </location>
    <ligand>
        <name>Mg(2+)</name>
        <dbReference type="ChEBI" id="CHEBI:18420"/>
    </ligand>
</feature>
<feature type="splice variant" id="VSP_031844" description="In isoform 2." evidence="6">
    <original>IF</original>
    <variation>VS</variation>
    <location>
        <begin position="304"/>
        <end position="305"/>
    </location>
</feature>
<feature type="splice variant" id="VSP_031845" description="In isoform 2." evidence="6">
    <location>
        <begin position="306"/>
        <end position="1183"/>
    </location>
</feature>
<feature type="splice variant" id="VSP_031846" description="In isoform 3." evidence="6">
    <original>KDKVDFS</original>
    <variation>VSNYSFL</variation>
    <location>
        <begin position="454"/>
        <end position="460"/>
    </location>
</feature>
<feature type="splice variant" id="VSP_031847" description="In isoform 3." evidence="6">
    <location>
        <begin position="461"/>
        <end position="1183"/>
    </location>
</feature>
<feature type="sequence conflict" description="In Ref. 3; CAM16528." evidence="7" ref="3">
    <original>KYVKAFVSEISWDCSWYCSAMQERRNEDRQKE</original>
    <variation>GSNGASSHRTSTLLTGQPSQHPRLVSEQIPQQ</variation>
    <location>
        <begin position="2"/>
        <end position="33"/>
    </location>
</feature>
<sequence>MKYVKAFVSEISWDCSWYCSAMQERRNEDRQKEEEERILQANNRRFNSLFEYPDNSIKTSKYGFFNFLPMNLFEQFQRLANAYFLILLFLQLVPQISSLAWYTTVIPLIVVLSITGVKDAIDDVKRHRSDQQINNRSVSILVNGRVEEIKWRNVQVGDIIKLENNHPVTADMLLLSSSEPYGLTYIETADLDGETNLKVKQAISVTSAMEDNLELLSSFNGEVRCDPPNNKLDKFSGTLSYLGNTYLLNHERLLLRGCVIRNTDWCYGLVVYTGQDTKLMQNSGRSTFKRTHIDHLMNVLVVWIFMFLGGMCFLLSIGHGIWENSRGYYFQAFLPWKHYITSSATSSALIFWSYFIVLNTMVPISLYVSVEIIRLGNSYYINWDRKMFYAPKNMPAQARTTTLNEELGQVQYVFSDKTGTLTENVMIFNKCSINGKTYGYSYDDNGEYVPKSPKDKVDFSYNHLADPKFSFYDKTLVEAVKSEDPLVYLFFLCLSLCHTVMSEEKVEGELVYQAQSPDEGALVTATRNFGFVFCSRTPETITVIEMGKIRVYRLLAILDFSNERKRMSVIVRTPEDRVMLFCKGADTIIYELLHPSCASLSEVTMDHLDDFASEGLRTLMVAYRELDKAYFQTWIKKHGEAWLTLENRERKLALVYEEIERDLMLLGATAIEDKLQRGVPETIVTLSKAKIKIWVLTGDKQETAVNIAYSCRIFKDEMDGVFMVEGTDRETVLEELRTARKKMKPESLLESDPINMYLARKPKMPFKSLDEVANGNYGLVISGYSLAYALEGSLEFELLRTACMCKGVVCCRMTPLQKAQVVDLVKRYKKVVTLAIGDGANDISMIKAAHIGVGISNQEGMQATLSSDFSFCQFHFLQRLLLVHGRLSYNRMCKFLSYFFYKNFAFTLVHFWYAFFNGFSAQTVYDIWFITFYNLIYTSLPVLGLSLFEKDVNETWSLCYPELYEPGQHNLYFNKKEFVKCLLHGIYNSFVLFFVPMGTVFNSERNDGKDISDFQSFSLLVQTTLIGVMTMQIALRTTSWTMINHTFTWGSLGLYFCILILLCSDGLCLRYPSIFNFLGVARNSLSQPQIWLCLILSTILCMIPLIGYNFLRPLLWPINADKVLNRIHFCLKHPIPTQVQTKIKHPSLRRSAYAFSHKQGFGALITSGKTLKSSALAKSKRFL</sequence>
<organism>
    <name type="scientific">Mus musculus</name>
    <name type="common">Mouse</name>
    <dbReference type="NCBI Taxonomy" id="10090"/>
    <lineage>
        <taxon>Eukaryota</taxon>
        <taxon>Metazoa</taxon>
        <taxon>Chordata</taxon>
        <taxon>Craniata</taxon>
        <taxon>Vertebrata</taxon>
        <taxon>Euteleostomi</taxon>
        <taxon>Mammalia</taxon>
        <taxon>Eutheria</taxon>
        <taxon>Euarchontoglires</taxon>
        <taxon>Glires</taxon>
        <taxon>Rodentia</taxon>
        <taxon>Myomorpha</taxon>
        <taxon>Muroidea</taxon>
        <taxon>Muridae</taxon>
        <taxon>Murinae</taxon>
        <taxon>Mus</taxon>
        <taxon>Mus</taxon>
    </lineage>
</organism>